<sequence length="184" mass="20550">MTRYSVQSVDPTKTASARGAYLRTSFKNTYEVAGAIRGWNLQKALAYLDQVTDHKRAIPFRKHAGSIGRTGQGKEFGVTKARWPVKSIKFVQDLLQNAQANAETKGLDKETLVISHIQVNQAPKQRRRTYRAHGRINAYQSSPSHIELILSEPAEEIAKAKETSLAHISSRQRGRIAAQKRISA</sequence>
<reference key="1">
    <citation type="journal article" date="2004" name="Nature">
        <title>Genome evolution in yeasts.</title>
        <authorList>
            <person name="Dujon B."/>
            <person name="Sherman D."/>
            <person name="Fischer G."/>
            <person name="Durrens P."/>
            <person name="Casaregola S."/>
            <person name="Lafontaine I."/>
            <person name="de Montigny J."/>
            <person name="Marck C."/>
            <person name="Neuveglise C."/>
            <person name="Talla E."/>
            <person name="Goffard N."/>
            <person name="Frangeul L."/>
            <person name="Aigle M."/>
            <person name="Anthouard V."/>
            <person name="Babour A."/>
            <person name="Barbe V."/>
            <person name="Barnay S."/>
            <person name="Blanchin S."/>
            <person name="Beckerich J.-M."/>
            <person name="Beyne E."/>
            <person name="Bleykasten C."/>
            <person name="Boisrame A."/>
            <person name="Boyer J."/>
            <person name="Cattolico L."/>
            <person name="Confanioleri F."/>
            <person name="de Daruvar A."/>
            <person name="Despons L."/>
            <person name="Fabre E."/>
            <person name="Fairhead C."/>
            <person name="Ferry-Dumazet H."/>
            <person name="Groppi A."/>
            <person name="Hantraye F."/>
            <person name="Hennequin C."/>
            <person name="Jauniaux N."/>
            <person name="Joyet P."/>
            <person name="Kachouri R."/>
            <person name="Kerrest A."/>
            <person name="Koszul R."/>
            <person name="Lemaire M."/>
            <person name="Lesur I."/>
            <person name="Ma L."/>
            <person name="Muller H."/>
            <person name="Nicaud J.-M."/>
            <person name="Nikolski M."/>
            <person name="Oztas S."/>
            <person name="Ozier-Kalogeropoulos O."/>
            <person name="Pellenz S."/>
            <person name="Potier S."/>
            <person name="Richard G.-F."/>
            <person name="Straub M.-L."/>
            <person name="Suleau A."/>
            <person name="Swennen D."/>
            <person name="Tekaia F."/>
            <person name="Wesolowski-Louvel M."/>
            <person name="Westhof E."/>
            <person name="Wirth B."/>
            <person name="Zeniou-Meyer M."/>
            <person name="Zivanovic Y."/>
            <person name="Bolotin-Fukuhara M."/>
            <person name="Thierry A."/>
            <person name="Bouchier C."/>
            <person name="Caudron B."/>
            <person name="Scarpelli C."/>
            <person name="Gaillardin C."/>
            <person name="Weissenbach J."/>
            <person name="Wincker P."/>
            <person name="Souciet J.-L."/>
        </authorList>
    </citation>
    <scope>NUCLEOTIDE SEQUENCE [LARGE SCALE GENOMIC DNA]</scope>
    <source>
        <strain>CLIB 122 / E 150</strain>
    </source>
</reference>
<evidence type="ECO:0000305" key="1"/>
<gene>
    <name type="primary">RPL17</name>
    <name type="ordered locus">YALI0C15895g</name>
</gene>
<name>RL17_YARLI</name>
<feature type="chain" id="PRO_0000125346" description="Large ribosomal subunit protein uL22">
    <location>
        <begin position="1"/>
        <end position="184"/>
    </location>
</feature>
<comment type="similarity">
    <text evidence="1">Belongs to the universal ribosomal protein uL22 family.</text>
</comment>
<dbReference type="EMBL" id="CR382129">
    <property type="protein sequence ID" value="CAG82198.1"/>
    <property type="molecule type" value="Genomic_DNA"/>
</dbReference>
<dbReference type="RefSeq" id="XP_501885.1">
    <property type="nucleotide sequence ID" value="XM_501885.1"/>
</dbReference>
<dbReference type="SMR" id="Q6CBS7"/>
<dbReference type="FunCoup" id="Q6CBS7">
    <property type="interactions" value="1061"/>
</dbReference>
<dbReference type="STRING" id="284591.Q6CBS7"/>
<dbReference type="EnsemblFungi" id="CAG82198">
    <property type="protein sequence ID" value="CAG82198"/>
    <property type="gene ID" value="YALI0_C15895g"/>
</dbReference>
<dbReference type="KEGG" id="yli:2909442"/>
<dbReference type="VEuPathDB" id="FungiDB:YALI0_C15895g"/>
<dbReference type="HOGENOM" id="CLU_083987_0_0_1"/>
<dbReference type="InParanoid" id="Q6CBS7"/>
<dbReference type="OMA" id="NTYETAR"/>
<dbReference type="OrthoDB" id="5500at4891"/>
<dbReference type="Proteomes" id="UP000001300">
    <property type="component" value="Chromosome C"/>
</dbReference>
<dbReference type="GO" id="GO:0022625">
    <property type="term" value="C:cytosolic large ribosomal subunit"/>
    <property type="evidence" value="ECO:0000318"/>
    <property type="project" value="GO_Central"/>
</dbReference>
<dbReference type="GO" id="GO:0003735">
    <property type="term" value="F:structural constituent of ribosome"/>
    <property type="evidence" value="ECO:0000318"/>
    <property type="project" value="GO_Central"/>
</dbReference>
<dbReference type="GO" id="GO:0002181">
    <property type="term" value="P:cytoplasmic translation"/>
    <property type="evidence" value="ECO:0000318"/>
    <property type="project" value="GO_Central"/>
</dbReference>
<dbReference type="CDD" id="cd00336">
    <property type="entry name" value="Ribosomal_L22"/>
    <property type="match status" value="1"/>
</dbReference>
<dbReference type="FunFam" id="3.90.470.10:FF:000010">
    <property type="entry name" value="60S ribosomal protein L17"/>
    <property type="match status" value="1"/>
</dbReference>
<dbReference type="Gene3D" id="3.90.470.10">
    <property type="entry name" value="Ribosomal protein L22/L17"/>
    <property type="match status" value="1"/>
</dbReference>
<dbReference type="InterPro" id="IPR001063">
    <property type="entry name" value="Ribosomal_uL22"/>
</dbReference>
<dbReference type="InterPro" id="IPR018260">
    <property type="entry name" value="Ribosomal_uL22_CS"/>
</dbReference>
<dbReference type="InterPro" id="IPR005721">
    <property type="entry name" value="Ribosomal_uL22_euk/arc"/>
</dbReference>
<dbReference type="InterPro" id="IPR036394">
    <property type="entry name" value="Ribosomal_uL22_sf"/>
</dbReference>
<dbReference type="NCBIfam" id="TIGR01038">
    <property type="entry name" value="uL22_arch_euk"/>
    <property type="match status" value="1"/>
</dbReference>
<dbReference type="PANTHER" id="PTHR11593">
    <property type="entry name" value="60S RIBOSOMAL PROTEIN L17"/>
    <property type="match status" value="1"/>
</dbReference>
<dbReference type="PANTHER" id="PTHR11593:SF10">
    <property type="entry name" value="60S RIBOSOMAL PROTEIN L17"/>
    <property type="match status" value="1"/>
</dbReference>
<dbReference type="Pfam" id="PF00237">
    <property type="entry name" value="Ribosomal_L22"/>
    <property type="match status" value="1"/>
</dbReference>
<dbReference type="SUPFAM" id="SSF54843">
    <property type="entry name" value="Ribosomal protein L22"/>
    <property type="match status" value="1"/>
</dbReference>
<dbReference type="PROSITE" id="PS00464">
    <property type="entry name" value="RIBOSOMAL_L22"/>
    <property type="match status" value="1"/>
</dbReference>
<protein>
    <recommendedName>
        <fullName evidence="1">Large ribosomal subunit protein uL22</fullName>
    </recommendedName>
    <alternativeName>
        <fullName>60S ribosomal protein L17</fullName>
    </alternativeName>
</protein>
<accession>Q6CBS7</accession>
<organism>
    <name type="scientific">Yarrowia lipolytica (strain CLIB 122 / E 150)</name>
    <name type="common">Yeast</name>
    <name type="synonym">Candida lipolytica</name>
    <dbReference type="NCBI Taxonomy" id="284591"/>
    <lineage>
        <taxon>Eukaryota</taxon>
        <taxon>Fungi</taxon>
        <taxon>Dikarya</taxon>
        <taxon>Ascomycota</taxon>
        <taxon>Saccharomycotina</taxon>
        <taxon>Dipodascomycetes</taxon>
        <taxon>Dipodascales</taxon>
        <taxon>Dipodascales incertae sedis</taxon>
        <taxon>Yarrowia</taxon>
    </lineage>
</organism>
<proteinExistence type="inferred from homology"/>
<keyword id="KW-1185">Reference proteome</keyword>
<keyword id="KW-0687">Ribonucleoprotein</keyword>
<keyword id="KW-0689">Ribosomal protein</keyword>